<sequence>MSSESKGIPIPRSDSNKTSDVSSWEEDYELISLGSSQDALQRSGIRSAHGDSGYASSPLRMEHLSSSTIIINNQLKKIDVNESIPENSTLHNKYELGAVESSTSSLSLLQSKEEDDSSNWETEDSESAVEEAELPTIFEGKTVISPSSSGTDHSEAVEYTVPTAPPIPDLRFQQSYLQSIQRANGSAFLVALITLRDHVLYPFLSGGMWVFVRHIFQFLKLQEKGFHFGQSLRRNLGLFSTFKD</sequence>
<proteinExistence type="evidence at protein level"/>
<evidence type="ECO:0000255" key="1"/>
<evidence type="ECO:0000256" key="2">
    <source>
        <dbReference type="SAM" id="MobiDB-lite"/>
    </source>
</evidence>
<evidence type="ECO:0000269" key="3">
    <source>
    </source>
</evidence>
<evidence type="ECO:0000303" key="4">
    <source>
    </source>
</evidence>
<evidence type="ECO:0000305" key="5">
    <source>
    </source>
</evidence>
<evidence type="ECO:0000312" key="6">
    <source>
        <dbReference type="PomBase" id="SPAC14C4.01c"/>
    </source>
</evidence>
<protein>
    <recommendedName>
        <fullName evidence="4">Mitophagy receptor atg43</fullName>
    </recommendedName>
</protein>
<comment type="function">
    <text evidence="3">Mitophagy receptor that tethers atg8 to the mitochondrial outer membrane to promote selective autophagy.</text>
</comment>
<comment type="subunit">
    <text evidence="3">Interacts (via N-terminal atg8 interacting motif) with atg8; the interaction is direct (PubMed:33138913). Interacts with the mitochondrial outer import machinery (MIM) complex subunits mim1 and mim2 (PubMed:33138913).</text>
</comment>
<comment type="subcellular location">
    <subcellularLocation>
        <location evidence="3">Mitochondrion outer membrane</location>
        <topology evidence="3">Single-pass type IV membrane protein</topology>
    </subcellularLocation>
</comment>
<comment type="induction">
    <text evidence="3">Increases during nitrogen starvation (at protein level) (PubMed:33138913). Repressed in nutrient-replete conditions in a TORC1-dependent manner (at protein level) (PubMed:33138913).</text>
</comment>
<comment type="domain">
    <text evidence="3">The atg8 interacting motif (AIM) is required for the interaction with atg8 (PubMed:33138913). The AIM motif is required for atg43 function as mitophagy receptor (PubMed:33138913).</text>
</comment>
<comment type="disruption phenotype">
    <text evidence="3">Abnormal mitophagy during nitrogen starvation (PubMed:33138913). Decreases vegetative cell population growth (PubMed:33138913).</text>
</comment>
<organism>
    <name type="scientific">Schizosaccharomyces pombe (strain 972 / ATCC 24843)</name>
    <name type="common">Fission yeast</name>
    <dbReference type="NCBI Taxonomy" id="284812"/>
    <lineage>
        <taxon>Eukaryota</taxon>
        <taxon>Fungi</taxon>
        <taxon>Dikarya</taxon>
        <taxon>Ascomycota</taxon>
        <taxon>Taphrinomycotina</taxon>
        <taxon>Schizosaccharomycetes</taxon>
        <taxon>Schizosaccharomycetales</taxon>
        <taxon>Schizosaccharomycetaceae</taxon>
        <taxon>Schizosaccharomyces</taxon>
    </lineage>
</organism>
<dbReference type="EMBL" id="CU329670">
    <property type="protein sequence ID" value="CAB50790.2"/>
    <property type="molecule type" value="Genomic_DNA"/>
</dbReference>
<dbReference type="PIR" id="T37686">
    <property type="entry name" value="T37686"/>
</dbReference>
<dbReference type="RefSeq" id="NP_594906.2">
    <property type="nucleotide sequence ID" value="NM_001020337.2"/>
</dbReference>
<dbReference type="BioGRID" id="278177">
    <property type="interactions" value="11"/>
</dbReference>
<dbReference type="STRING" id="284812.O13709"/>
<dbReference type="iPTMnet" id="O13709"/>
<dbReference type="PaxDb" id="4896-SPAC14C4.01c.1"/>
<dbReference type="EnsemblFungi" id="SPAC14C4.01c.1">
    <property type="protein sequence ID" value="SPAC14C4.01c.1:pep"/>
    <property type="gene ID" value="SPAC14C4.01c"/>
</dbReference>
<dbReference type="GeneID" id="2541681"/>
<dbReference type="KEGG" id="spo:2541681"/>
<dbReference type="PomBase" id="SPAC14C4.01c">
    <property type="gene designation" value="atg43"/>
</dbReference>
<dbReference type="VEuPathDB" id="FungiDB:SPAC14C4.01c"/>
<dbReference type="HOGENOM" id="CLU_1138567_0_0_1"/>
<dbReference type="InParanoid" id="O13709"/>
<dbReference type="OMA" id="CWITVRD"/>
<dbReference type="PRO" id="PR:O13709"/>
<dbReference type="Proteomes" id="UP000002485">
    <property type="component" value="Chromosome I"/>
</dbReference>
<dbReference type="GO" id="GO:0005741">
    <property type="term" value="C:mitochondrial outer membrane"/>
    <property type="evidence" value="ECO:0000269"/>
    <property type="project" value="PomBase"/>
</dbReference>
<dbReference type="GO" id="GO:0005739">
    <property type="term" value="C:mitochondrion"/>
    <property type="evidence" value="ECO:0007005"/>
    <property type="project" value="PomBase"/>
</dbReference>
<dbReference type="GO" id="GO:0140580">
    <property type="term" value="F:mitochondrion autophagosome adaptor activity"/>
    <property type="evidence" value="ECO:0000269"/>
    <property type="project" value="PomBase"/>
</dbReference>
<dbReference type="GO" id="GO:0000423">
    <property type="term" value="P:mitophagy"/>
    <property type="evidence" value="ECO:0000269"/>
    <property type="project" value="PomBase"/>
</dbReference>
<dbReference type="InterPro" id="IPR013898">
    <property type="entry name" value="Atg43"/>
</dbReference>
<dbReference type="PANTHER" id="PTHR38699">
    <property type="entry name" value="CHROMOSOME 1, WHOLE GENOME SHOTGUN SEQUENCE"/>
    <property type="match status" value="1"/>
</dbReference>
<dbReference type="PANTHER" id="PTHR38699:SF1">
    <property type="entry name" value="MITOPHAGY RECEPTOR ATG43"/>
    <property type="match status" value="1"/>
</dbReference>
<dbReference type="Pfam" id="PF08589">
    <property type="entry name" value="ATG43"/>
    <property type="match status" value="1"/>
</dbReference>
<feature type="chain" id="PRO_0000116680" description="Mitophagy receptor atg43">
    <location>
        <begin position="1"/>
        <end position="244"/>
    </location>
</feature>
<feature type="topological domain" description="Cytoplasmic" evidence="5">
    <location>
        <begin position="1"/>
        <end position="198"/>
    </location>
</feature>
<feature type="transmembrane region" description="Helical" evidence="1 5">
    <location>
        <begin position="199"/>
        <end position="215"/>
    </location>
</feature>
<feature type="topological domain" description="Mitochondrial intermembrane" evidence="5">
    <location>
        <begin position="216"/>
        <end position="244"/>
    </location>
</feature>
<feature type="region of interest" description="Disordered" evidence="2">
    <location>
        <begin position="1"/>
        <end position="24"/>
    </location>
</feature>
<feature type="region of interest" description="Disordered" evidence="2">
    <location>
        <begin position="105"/>
        <end position="131"/>
    </location>
</feature>
<feature type="region of interest" description="Involved in MIM complex binding. Required for normal vegetative cell population growth but is dispensable for mitophagy" evidence="3">
    <location>
        <begin position="165"/>
        <end position="184"/>
    </location>
</feature>
<feature type="short sequence motif" description="atg8 interacting motif (AIM)" evidence="3">
    <location>
        <begin position="28"/>
        <end position="31"/>
    </location>
</feature>
<feature type="compositionally biased region" description="Acidic residues" evidence="2">
    <location>
        <begin position="113"/>
        <end position="131"/>
    </location>
</feature>
<feature type="mutagenesis site" description="Abolishes atg8 binding. Abnormal mitophagy during nitrogen starvation. Sensitive to nitrogen starvation." evidence="3">
    <original>YELI</original>
    <variation>AELA</variation>
    <location>
        <begin position="28"/>
        <end position="31"/>
    </location>
</feature>
<reference key="1">
    <citation type="journal article" date="2002" name="Nature">
        <title>The genome sequence of Schizosaccharomyces pombe.</title>
        <authorList>
            <person name="Wood V."/>
            <person name="Gwilliam R."/>
            <person name="Rajandream M.A."/>
            <person name="Lyne M.H."/>
            <person name="Lyne R."/>
            <person name="Stewart A."/>
            <person name="Sgouros J.G."/>
            <person name="Peat N."/>
            <person name="Hayles J."/>
            <person name="Baker S.G."/>
            <person name="Basham D."/>
            <person name="Bowman S."/>
            <person name="Brooks K."/>
            <person name="Brown D."/>
            <person name="Brown S."/>
            <person name="Chillingworth T."/>
            <person name="Churcher C.M."/>
            <person name="Collins M."/>
            <person name="Connor R."/>
            <person name="Cronin A."/>
            <person name="Davis P."/>
            <person name="Feltwell T."/>
            <person name="Fraser A."/>
            <person name="Gentles S."/>
            <person name="Goble A."/>
            <person name="Hamlin N."/>
            <person name="Harris D.E."/>
            <person name="Hidalgo J."/>
            <person name="Hodgson G."/>
            <person name="Holroyd S."/>
            <person name="Hornsby T."/>
            <person name="Howarth S."/>
            <person name="Huckle E.J."/>
            <person name="Hunt S."/>
            <person name="Jagels K."/>
            <person name="James K.D."/>
            <person name="Jones L."/>
            <person name="Jones M."/>
            <person name="Leather S."/>
            <person name="McDonald S."/>
            <person name="McLean J."/>
            <person name="Mooney P."/>
            <person name="Moule S."/>
            <person name="Mungall K.L."/>
            <person name="Murphy L.D."/>
            <person name="Niblett D."/>
            <person name="Odell C."/>
            <person name="Oliver K."/>
            <person name="O'Neil S."/>
            <person name="Pearson D."/>
            <person name="Quail M.A."/>
            <person name="Rabbinowitsch E."/>
            <person name="Rutherford K.M."/>
            <person name="Rutter S."/>
            <person name="Saunders D."/>
            <person name="Seeger K."/>
            <person name="Sharp S."/>
            <person name="Skelton J."/>
            <person name="Simmonds M.N."/>
            <person name="Squares R."/>
            <person name="Squares S."/>
            <person name="Stevens K."/>
            <person name="Taylor K."/>
            <person name="Taylor R.G."/>
            <person name="Tivey A."/>
            <person name="Walsh S.V."/>
            <person name="Warren T."/>
            <person name="Whitehead S."/>
            <person name="Woodward J.R."/>
            <person name="Volckaert G."/>
            <person name="Aert R."/>
            <person name="Robben J."/>
            <person name="Grymonprez B."/>
            <person name="Weltjens I."/>
            <person name="Vanstreels E."/>
            <person name="Rieger M."/>
            <person name="Schaefer M."/>
            <person name="Mueller-Auer S."/>
            <person name="Gabel C."/>
            <person name="Fuchs M."/>
            <person name="Duesterhoeft A."/>
            <person name="Fritzc C."/>
            <person name="Holzer E."/>
            <person name="Moestl D."/>
            <person name="Hilbert H."/>
            <person name="Borzym K."/>
            <person name="Langer I."/>
            <person name="Beck A."/>
            <person name="Lehrach H."/>
            <person name="Reinhardt R."/>
            <person name="Pohl T.M."/>
            <person name="Eger P."/>
            <person name="Zimmermann W."/>
            <person name="Wedler H."/>
            <person name="Wambutt R."/>
            <person name="Purnelle B."/>
            <person name="Goffeau A."/>
            <person name="Cadieu E."/>
            <person name="Dreano S."/>
            <person name="Gloux S."/>
            <person name="Lelaure V."/>
            <person name="Mottier S."/>
            <person name="Galibert F."/>
            <person name="Aves S.J."/>
            <person name="Xiang Z."/>
            <person name="Hunt C."/>
            <person name="Moore K."/>
            <person name="Hurst S.M."/>
            <person name="Lucas M."/>
            <person name="Rochet M."/>
            <person name="Gaillardin C."/>
            <person name="Tallada V.A."/>
            <person name="Garzon A."/>
            <person name="Thode G."/>
            <person name="Daga R.R."/>
            <person name="Cruzado L."/>
            <person name="Jimenez J."/>
            <person name="Sanchez M."/>
            <person name="del Rey F."/>
            <person name="Benito J."/>
            <person name="Dominguez A."/>
            <person name="Revuelta J.L."/>
            <person name="Moreno S."/>
            <person name="Armstrong J."/>
            <person name="Forsburg S.L."/>
            <person name="Cerutti L."/>
            <person name="Lowe T."/>
            <person name="McCombie W.R."/>
            <person name="Paulsen I."/>
            <person name="Potashkin J."/>
            <person name="Shpakovski G.V."/>
            <person name="Ussery D."/>
            <person name="Barrell B.G."/>
            <person name="Nurse P."/>
        </authorList>
    </citation>
    <scope>NUCLEOTIDE SEQUENCE [LARGE SCALE GENOMIC DNA]</scope>
    <source>
        <strain>972 / ATCC 24843</strain>
    </source>
</reference>
<reference key="2">
    <citation type="journal article" date="2020" name="Elife">
        <title>Atg43 tethers isolation membranes to mitochondria to promote starvation-induced mitophagy in fission yeast.</title>
        <authorList>
            <person name="Fukuda T."/>
            <person name="Ebi Y."/>
            <person name="Saigusa T."/>
            <person name="Furukawa K."/>
            <person name="Yamashita S.I."/>
            <person name="Inoue K."/>
            <person name="Kobayashi D."/>
            <person name="Yoshida Y."/>
            <person name="Kanki T."/>
        </authorList>
    </citation>
    <scope>FUNCTION</scope>
    <scope>INTERACTION WITH ATG8; MIM1 AND MIM2</scope>
    <scope>SUBCELLULAR LOCATION</scope>
    <scope>INDUCTION</scope>
    <scope>DOMAIN</scope>
    <scope>DISRUPTION PHENOTYPE</scope>
    <scope>TOPOLOGY</scope>
    <scope>MUTAGENESIS OF 28-TYR--ILE-31</scope>
</reference>
<gene>
    <name evidence="4" type="primary">atg43</name>
    <name evidence="6" type="ORF">SPAC14C4.01c</name>
    <name evidence="6" type="ORF">SPAC19D5.08c</name>
</gene>
<name>ATG43_SCHPO</name>
<accession>O13709</accession>
<accession>Q9Y828</accession>
<keyword id="KW-0072">Autophagy</keyword>
<keyword id="KW-0472">Membrane</keyword>
<keyword id="KW-0496">Mitochondrion</keyword>
<keyword id="KW-1000">Mitochondrion outer membrane</keyword>
<keyword id="KW-1185">Reference proteome</keyword>
<keyword id="KW-0812">Transmembrane</keyword>
<keyword id="KW-1133">Transmembrane helix</keyword>